<protein>
    <recommendedName>
        <fullName evidence="1">Potassium-transporting ATPase KdpC subunit</fullName>
    </recommendedName>
    <alternativeName>
        <fullName evidence="1">ATP phosphohydrolase [potassium-transporting] C chain</fullName>
    </alternativeName>
    <alternativeName>
        <fullName evidence="1">Potassium-binding and translocating subunit C</fullName>
    </alternativeName>
    <alternativeName>
        <fullName evidence="1">Potassium-translocating ATPase C chain</fullName>
    </alternativeName>
</protein>
<gene>
    <name evidence="1" type="primary">kdpC</name>
    <name type="ordered locus">Bcer98_0626</name>
</gene>
<reference key="1">
    <citation type="journal article" date="2008" name="Chem. Biol. Interact.">
        <title>Extending the Bacillus cereus group genomics to putative food-borne pathogens of different toxicity.</title>
        <authorList>
            <person name="Lapidus A."/>
            <person name="Goltsman E."/>
            <person name="Auger S."/>
            <person name="Galleron N."/>
            <person name="Segurens B."/>
            <person name="Dossat C."/>
            <person name="Land M.L."/>
            <person name="Broussolle V."/>
            <person name="Brillard J."/>
            <person name="Guinebretiere M.-H."/>
            <person name="Sanchis V."/>
            <person name="Nguen-the C."/>
            <person name="Lereclus D."/>
            <person name="Richardson P."/>
            <person name="Wincker P."/>
            <person name="Weissenbach J."/>
            <person name="Ehrlich S.D."/>
            <person name="Sorokin A."/>
        </authorList>
    </citation>
    <scope>NUCLEOTIDE SEQUENCE [LARGE SCALE GENOMIC DNA]</scope>
    <source>
        <strain>DSM 22905 / CIP 110041 / 391-98 / NVH 391-98</strain>
    </source>
</reference>
<name>KDPC_BACCN</name>
<keyword id="KW-0067">ATP-binding</keyword>
<keyword id="KW-1003">Cell membrane</keyword>
<keyword id="KW-0406">Ion transport</keyword>
<keyword id="KW-0472">Membrane</keyword>
<keyword id="KW-0547">Nucleotide-binding</keyword>
<keyword id="KW-0630">Potassium</keyword>
<keyword id="KW-0633">Potassium transport</keyword>
<keyword id="KW-0812">Transmembrane</keyword>
<keyword id="KW-1133">Transmembrane helix</keyword>
<keyword id="KW-0813">Transport</keyword>
<comment type="function">
    <text evidence="1">Part of the high-affinity ATP-driven potassium transport (or Kdp) system, which catalyzes the hydrolysis of ATP coupled with the electrogenic transport of potassium into the cytoplasm. This subunit acts as a catalytic chaperone that increases the ATP-binding affinity of the ATP-hydrolyzing subunit KdpB by the formation of a transient KdpB/KdpC/ATP ternary complex.</text>
</comment>
<comment type="subunit">
    <text evidence="1">The system is composed of three essential subunits: KdpA, KdpB and KdpC.</text>
</comment>
<comment type="subcellular location">
    <subcellularLocation>
        <location evidence="1">Cell membrane</location>
        <topology evidence="1">Single-pass membrane protein</topology>
    </subcellularLocation>
</comment>
<comment type="similarity">
    <text evidence="1">Belongs to the KdpC family.</text>
</comment>
<accession>A7GLG5</accession>
<feature type="chain" id="PRO_1000078791" description="Potassium-transporting ATPase KdpC subunit">
    <location>
        <begin position="1"/>
        <end position="192"/>
    </location>
</feature>
<feature type="transmembrane region" description="Helical" evidence="1">
    <location>
        <begin position="14"/>
        <end position="34"/>
    </location>
</feature>
<sequence length="192" mass="21119">MTEKQNLFGPVVRLTGVLVVLCGLIYPAMVTGIAQGVMKDHADGSLIYEKGEIIGSKRIGQEFTSAKYFHGRISSIAYKAEGSGSNNYAPSNPELRQRTEESIEKWKEDNPSVPVREVPIDLVTNSGSGLDPDISPKAAYAQVDRVAKETKISKEELKAIIASHIEGRAFGLYGEERVNVLQLNMEVKKRIQ</sequence>
<proteinExistence type="inferred from homology"/>
<organism>
    <name type="scientific">Bacillus cytotoxicus (strain DSM 22905 / CIP 110041 / 391-98 / NVH 391-98)</name>
    <dbReference type="NCBI Taxonomy" id="315749"/>
    <lineage>
        <taxon>Bacteria</taxon>
        <taxon>Bacillati</taxon>
        <taxon>Bacillota</taxon>
        <taxon>Bacilli</taxon>
        <taxon>Bacillales</taxon>
        <taxon>Bacillaceae</taxon>
        <taxon>Bacillus</taxon>
        <taxon>Bacillus cereus group</taxon>
    </lineage>
</organism>
<evidence type="ECO:0000255" key="1">
    <source>
        <dbReference type="HAMAP-Rule" id="MF_00276"/>
    </source>
</evidence>
<dbReference type="EMBL" id="CP000764">
    <property type="protein sequence ID" value="ABS20973.1"/>
    <property type="molecule type" value="Genomic_DNA"/>
</dbReference>
<dbReference type="RefSeq" id="WP_011983729.1">
    <property type="nucleotide sequence ID" value="NC_009674.1"/>
</dbReference>
<dbReference type="SMR" id="A7GLG5"/>
<dbReference type="STRING" id="315749.Bcer98_0626"/>
<dbReference type="GeneID" id="33896006"/>
<dbReference type="KEGG" id="bcy:Bcer98_0626"/>
<dbReference type="eggNOG" id="COG2156">
    <property type="taxonomic scope" value="Bacteria"/>
</dbReference>
<dbReference type="HOGENOM" id="CLU_077094_1_0_9"/>
<dbReference type="OrthoDB" id="9809491at2"/>
<dbReference type="Proteomes" id="UP000002300">
    <property type="component" value="Chromosome"/>
</dbReference>
<dbReference type="GO" id="GO:0005886">
    <property type="term" value="C:plasma membrane"/>
    <property type="evidence" value="ECO:0007669"/>
    <property type="project" value="UniProtKB-SubCell"/>
</dbReference>
<dbReference type="GO" id="GO:0005524">
    <property type="term" value="F:ATP binding"/>
    <property type="evidence" value="ECO:0007669"/>
    <property type="project" value="UniProtKB-UniRule"/>
</dbReference>
<dbReference type="GO" id="GO:0008556">
    <property type="term" value="F:P-type potassium transmembrane transporter activity"/>
    <property type="evidence" value="ECO:0007669"/>
    <property type="project" value="InterPro"/>
</dbReference>
<dbReference type="HAMAP" id="MF_00276">
    <property type="entry name" value="KdpC"/>
    <property type="match status" value="1"/>
</dbReference>
<dbReference type="InterPro" id="IPR003820">
    <property type="entry name" value="KdpC"/>
</dbReference>
<dbReference type="NCBIfam" id="TIGR00681">
    <property type="entry name" value="kdpC"/>
    <property type="match status" value="1"/>
</dbReference>
<dbReference type="NCBIfam" id="NF001454">
    <property type="entry name" value="PRK00315.1"/>
    <property type="match status" value="1"/>
</dbReference>
<dbReference type="NCBIfam" id="NF010601">
    <property type="entry name" value="PRK13997.1"/>
    <property type="match status" value="1"/>
</dbReference>
<dbReference type="PANTHER" id="PTHR30042">
    <property type="entry name" value="POTASSIUM-TRANSPORTING ATPASE C CHAIN"/>
    <property type="match status" value="1"/>
</dbReference>
<dbReference type="PANTHER" id="PTHR30042:SF2">
    <property type="entry name" value="POTASSIUM-TRANSPORTING ATPASE KDPC SUBUNIT"/>
    <property type="match status" value="1"/>
</dbReference>
<dbReference type="Pfam" id="PF02669">
    <property type="entry name" value="KdpC"/>
    <property type="match status" value="1"/>
</dbReference>
<dbReference type="PIRSF" id="PIRSF001296">
    <property type="entry name" value="K_ATPase_KdpC"/>
    <property type="match status" value="1"/>
</dbReference>